<keyword id="KW-0963">Cytoplasm</keyword>
<keyword id="KW-0539">Nucleus</keyword>
<keyword id="KW-0649">Protein kinase inhibitor</keyword>
<keyword id="KW-1185">Reference proteome</keyword>
<keyword id="KW-0770">Synapse</keyword>
<reference key="1">
    <citation type="submission" date="2007-04" db="EMBL/GenBank/DDBJ databases">
        <authorList>
            <consortium name="NIH - Mammalian Gene Collection (MGC) project"/>
        </authorList>
    </citation>
    <scope>NUCLEOTIDE SEQUENCE [LARGE SCALE MRNA]</scope>
    <source>
        <strain>Hereford</strain>
        <tissue>Fetal medulla</tissue>
    </source>
</reference>
<feature type="chain" id="PRO_0000327265" description="Calcium/calmodulin-dependent protein kinase II inhibitor 2">
    <location>
        <begin position="1"/>
        <end position="79"/>
    </location>
</feature>
<feature type="region of interest" description="Disordered" evidence="5">
    <location>
        <begin position="1"/>
        <end position="21"/>
    </location>
</feature>
<feature type="region of interest" description="Inhibitory domain" evidence="1">
    <location>
        <begin position="43"/>
        <end position="69"/>
    </location>
</feature>
<protein>
    <recommendedName>
        <fullName>Calcium/calmodulin-dependent protein kinase II inhibitor 2</fullName>
    </recommendedName>
    <alternativeName>
        <fullName>CaM-KII inhibitory protein</fullName>
        <shortName>CaM-KIIN</shortName>
    </alternativeName>
</protein>
<dbReference type="EMBL" id="BC140670">
    <property type="protein sequence ID" value="AAI40671.1"/>
    <property type="molecule type" value="mRNA"/>
</dbReference>
<dbReference type="RefSeq" id="NP_001107986.1">
    <property type="nucleotide sequence ID" value="NM_001114514.2"/>
</dbReference>
<dbReference type="FunCoup" id="A5D7T0">
    <property type="interactions" value="376"/>
</dbReference>
<dbReference type="STRING" id="9913.ENSBTAP00000007431"/>
<dbReference type="BindingDB" id="A5D7T0"/>
<dbReference type="PaxDb" id="9913-ENSBTAP00000007431"/>
<dbReference type="Ensembl" id="ENSBTAT00000007431.4">
    <property type="protein sequence ID" value="ENSBTAP00000007431.3"/>
    <property type="gene ID" value="ENSBTAG00000005657.5"/>
</dbReference>
<dbReference type="GeneID" id="614606"/>
<dbReference type="KEGG" id="bta:614606"/>
<dbReference type="CTD" id="94032"/>
<dbReference type="VEuPathDB" id="HostDB:ENSBTAG00000005657"/>
<dbReference type="VGNC" id="VGNC:26724">
    <property type="gene designation" value="CAMK2N2"/>
</dbReference>
<dbReference type="eggNOG" id="ENOG502S4FG">
    <property type="taxonomic scope" value="Eukaryota"/>
</dbReference>
<dbReference type="GeneTree" id="ENSGT00390000004940"/>
<dbReference type="HOGENOM" id="CLU_197183_0_0_1"/>
<dbReference type="InParanoid" id="A5D7T0"/>
<dbReference type="OMA" id="MSEIMPY"/>
<dbReference type="OrthoDB" id="411785at2759"/>
<dbReference type="TreeFam" id="TF333175"/>
<dbReference type="Proteomes" id="UP000009136">
    <property type="component" value="Chromosome 1"/>
</dbReference>
<dbReference type="Bgee" id="ENSBTAG00000005657">
    <property type="expression patterns" value="Expressed in floor plate of diencephalon and 50 other cell types or tissues"/>
</dbReference>
<dbReference type="GO" id="GO:0005829">
    <property type="term" value="C:cytosol"/>
    <property type="evidence" value="ECO:0007669"/>
    <property type="project" value="UniProtKB-SubCell"/>
</dbReference>
<dbReference type="GO" id="GO:0005634">
    <property type="term" value="C:nucleus"/>
    <property type="evidence" value="ECO:0007669"/>
    <property type="project" value="UniProtKB-SubCell"/>
</dbReference>
<dbReference type="GO" id="GO:0045202">
    <property type="term" value="C:synapse"/>
    <property type="evidence" value="ECO:0000250"/>
    <property type="project" value="UniProtKB"/>
</dbReference>
<dbReference type="GO" id="GO:0008427">
    <property type="term" value="F:calcium-dependent protein kinase inhibitor activity"/>
    <property type="evidence" value="ECO:0000318"/>
    <property type="project" value="GO_Central"/>
</dbReference>
<dbReference type="GO" id="GO:0019901">
    <property type="term" value="F:protein kinase binding"/>
    <property type="evidence" value="ECO:0000318"/>
    <property type="project" value="GO_Central"/>
</dbReference>
<dbReference type="InterPro" id="IPR026779">
    <property type="entry name" value="Camk2n"/>
</dbReference>
<dbReference type="PANTHER" id="PTHR31007">
    <property type="entry name" value="CALCIUM/CALMODULIN-DEPENDENT PROTEIN KINASE II INHIBITOR 2"/>
    <property type="match status" value="1"/>
</dbReference>
<dbReference type="PANTHER" id="PTHR31007:SF1">
    <property type="entry name" value="CALCIUM_CALMODULIN-DEPENDENT PROTEIN KINASE II INHIBITOR 2"/>
    <property type="match status" value="1"/>
</dbReference>
<dbReference type="Pfam" id="PF15170">
    <property type="entry name" value="CaM-KIIN"/>
    <property type="match status" value="1"/>
</dbReference>
<evidence type="ECO:0000250" key="1"/>
<evidence type="ECO:0000250" key="2">
    <source>
        <dbReference type="UniProtKB" id="Q78WH7"/>
    </source>
</evidence>
<evidence type="ECO:0000250" key="3">
    <source>
        <dbReference type="UniProtKB" id="Q96S95"/>
    </source>
</evidence>
<evidence type="ECO:0000250" key="4">
    <source>
        <dbReference type="UniProtKB" id="Q9Z2N6"/>
    </source>
</evidence>
<evidence type="ECO:0000256" key="5">
    <source>
        <dbReference type="SAM" id="MobiDB-lite"/>
    </source>
</evidence>
<evidence type="ECO:0000305" key="6"/>
<comment type="function">
    <text evidence="3 4">Potent and specific cellular inhibitor of CaM-kinase II (CAMK2) (By similarity). Traps Ca(2+)/calmodulin on CAMK2 (By similarity).</text>
</comment>
<comment type="subunit">
    <text evidence="4">Interacts with CAMK2A and CAMK2B in the presence of Ca(2+)/calmodulin or after autophosphorylation.</text>
</comment>
<comment type="subcellular location">
    <subcellularLocation>
        <location evidence="4">Nucleus</location>
    </subcellularLocation>
    <subcellularLocation>
        <location evidence="4">Cytoplasm</location>
        <location evidence="4">Cytosol</location>
    </subcellularLocation>
    <subcellularLocation>
        <location evidence="2">Synapse</location>
    </subcellularLocation>
    <text evidence="4">Excluded from nucleus when coexpressed with activated CAMK2.</text>
</comment>
<comment type="similarity">
    <text evidence="6">Belongs to the CAMK2N family.</text>
</comment>
<accession>A5D7T0</accession>
<gene>
    <name type="primary">CAMK2N2</name>
</gene>
<proteinExistence type="inferred from homology"/>
<organism>
    <name type="scientific">Bos taurus</name>
    <name type="common">Bovine</name>
    <dbReference type="NCBI Taxonomy" id="9913"/>
    <lineage>
        <taxon>Eukaryota</taxon>
        <taxon>Metazoa</taxon>
        <taxon>Chordata</taxon>
        <taxon>Craniata</taxon>
        <taxon>Vertebrata</taxon>
        <taxon>Euteleostomi</taxon>
        <taxon>Mammalia</taxon>
        <taxon>Eutheria</taxon>
        <taxon>Laurasiatheria</taxon>
        <taxon>Artiodactyla</taxon>
        <taxon>Ruminantia</taxon>
        <taxon>Pecora</taxon>
        <taxon>Bovidae</taxon>
        <taxon>Bovinae</taxon>
        <taxon>Bos</taxon>
    </lineage>
</organism>
<sequence>MSEILPYSEDKMGRFGADPEGSDLSFSCRLQDTNSFFAGNQAKRPPKLGQIGRAKRVVIEDDRIDDVLKGMGEKPPSGV</sequence>
<name>CK2N2_BOVIN</name>